<gene>
    <name evidence="1" type="primary">rpmA</name>
    <name evidence="1" type="synonym">rpl27</name>
    <name type="ordered locus">P9515_15061</name>
</gene>
<proteinExistence type="inferred from homology"/>
<keyword id="KW-0687">Ribonucleoprotein</keyword>
<keyword id="KW-0689">Ribosomal protein</keyword>
<accession>A2BY52</accession>
<sequence length="86" mass="9329">MAHKKGTGSTRNGRDSNSKRLGVKAFGGEKVSAGSIIIRQRGTSFLPGINVGKGKDDTLFALKEGTVSFDSIKRNLRNRKRVNIIL</sequence>
<feature type="chain" id="PRO_1000017551" description="Large ribosomal subunit protein bL27">
    <location>
        <begin position="1"/>
        <end position="86"/>
    </location>
</feature>
<feature type="region of interest" description="Disordered" evidence="2">
    <location>
        <begin position="1"/>
        <end position="23"/>
    </location>
</feature>
<dbReference type="EMBL" id="CP000552">
    <property type="protein sequence ID" value="ABM72713.1"/>
    <property type="molecule type" value="Genomic_DNA"/>
</dbReference>
<dbReference type="RefSeq" id="WP_011820809.1">
    <property type="nucleotide sequence ID" value="NC_008817.1"/>
</dbReference>
<dbReference type="SMR" id="A2BY52"/>
<dbReference type="STRING" id="167542.P9515_15061"/>
<dbReference type="GeneID" id="60200674"/>
<dbReference type="KEGG" id="pmc:P9515_15061"/>
<dbReference type="eggNOG" id="COG0211">
    <property type="taxonomic scope" value="Bacteria"/>
</dbReference>
<dbReference type="HOGENOM" id="CLU_095424_4_0_3"/>
<dbReference type="OrthoDB" id="9803474at2"/>
<dbReference type="Proteomes" id="UP000001589">
    <property type="component" value="Chromosome"/>
</dbReference>
<dbReference type="GO" id="GO:0022625">
    <property type="term" value="C:cytosolic large ribosomal subunit"/>
    <property type="evidence" value="ECO:0007669"/>
    <property type="project" value="TreeGrafter"/>
</dbReference>
<dbReference type="GO" id="GO:0003735">
    <property type="term" value="F:structural constituent of ribosome"/>
    <property type="evidence" value="ECO:0007669"/>
    <property type="project" value="InterPro"/>
</dbReference>
<dbReference type="GO" id="GO:0006412">
    <property type="term" value="P:translation"/>
    <property type="evidence" value="ECO:0007669"/>
    <property type="project" value="UniProtKB-UniRule"/>
</dbReference>
<dbReference type="FunFam" id="2.40.50.100:FF:000020">
    <property type="entry name" value="50S ribosomal protein L27"/>
    <property type="match status" value="1"/>
</dbReference>
<dbReference type="Gene3D" id="2.40.50.100">
    <property type="match status" value="1"/>
</dbReference>
<dbReference type="HAMAP" id="MF_00539">
    <property type="entry name" value="Ribosomal_bL27"/>
    <property type="match status" value="1"/>
</dbReference>
<dbReference type="InterPro" id="IPR001684">
    <property type="entry name" value="Ribosomal_bL27"/>
</dbReference>
<dbReference type="InterPro" id="IPR018261">
    <property type="entry name" value="Ribosomal_bL27_CS"/>
</dbReference>
<dbReference type="NCBIfam" id="TIGR00062">
    <property type="entry name" value="L27"/>
    <property type="match status" value="1"/>
</dbReference>
<dbReference type="PANTHER" id="PTHR15893:SF0">
    <property type="entry name" value="LARGE RIBOSOMAL SUBUNIT PROTEIN BL27M"/>
    <property type="match status" value="1"/>
</dbReference>
<dbReference type="PANTHER" id="PTHR15893">
    <property type="entry name" value="RIBOSOMAL PROTEIN L27"/>
    <property type="match status" value="1"/>
</dbReference>
<dbReference type="Pfam" id="PF01016">
    <property type="entry name" value="Ribosomal_L27"/>
    <property type="match status" value="1"/>
</dbReference>
<dbReference type="PRINTS" id="PR00063">
    <property type="entry name" value="RIBOSOMALL27"/>
</dbReference>
<dbReference type="SUPFAM" id="SSF110324">
    <property type="entry name" value="Ribosomal L27 protein-like"/>
    <property type="match status" value="1"/>
</dbReference>
<dbReference type="PROSITE" id="PS00831">
    <property type="entry name" value="RIBOSOMAL_L27"/>
    <property type="match status" value="1"/>
</dbReference>
<comment type="similarity">
    <text evidence="1">Belongs to the bacterial ribosomal protein bL27 family.</text>
</comment>
<reference key="1">
    <citation type="journal article" date="2007" name="PLoS Genet.">
        <title>Patterns and implications of gene gain and loss in the evolution of Prochlorococcus.</title>
        <authorList>
            <person name="Kettler G.C."/>
            <person name="Martiny A.C."/>
            <person name="Huang K."/>
            <person name="Zucker J."/>
            <person name="Coleman M.L."/>
            <person name="Rodrigue S."/>
            <person name="Chen F."/>
            <person name="Lapidus A."/>
            <person name="Ferriera S."/>
            <person name="Johnson J."/>
            <person name="Steglich C."/>
            <person name="Church G.M."/>
            <person name="Richardson P."/>
            <person name="Chisholm S.W."/>
        </authorList>
    </citation>
    <scope>NUCLEOTIDE SEQUENCE [LARGE SCALE GENOMIC DNA]</scope>
    <source>
        <strain>MIT 9515</strain>
    </source>
</reference>
<protein>
    <recommendedName>
        <fullName evidence="1">Large ribosomal subunit protein bL27</fullName>
    </recommendedName>
    <alternativeName>
        <fullName evidence="3">50S ribosomal protein L27</fullName>
    </alternativeName>
</protein>
<organism>
    <name type="scientific">Prochlorococcus marinus (strain MIT 9515)</name>
    <dbReference type="NCBI Taxonomy" id="167542"/>
    <lineage>
        <taxon>Bacteria</taxon>
        <taxon>Bacillati</taxon>
        <taxon>Cyanobacteriota</taxon>
        <taxon>Cyanophyceae</taxon>
        <taxon>Synechococcales</taxon>
        <taxon>Prochlorococcaceae</taxon>
        <taxon>Prochlorococcus</taxon>
    </lineage>
</organism>
<evidence type="ECO:0000255" key="1">
    <source>
        <dbReference type="HAMAP-Rule" id="MF_00539"/>
    </source>
</evidence>
<evidence type="ECO:0000256" key="2">
    <source>
        <dbReference type="SAM" id="MobiDB-lite"/>
    </source>
</evidence>
<evidence type="ECO:0000305" key="3"/>
<name>RL27_PROM5</name>